<gene>
    <name evidence="1" type="primary">rlmH</name>
    <name type="ordered locus">pc1708</name>
</gene>
<name>RLMH_PARUW</name>
<keyword id="KW-0963">Cytoplasm</keyword>
<keyword id="KW-0489">Methyltransferase</keyword>
<keyword id="KW-1185">Reference proteome</keyword>
<keyword id="KW-0698">rRNA processing</keyword>
<keyword id="KW-0949">S-adenosyl-L-methionine</keyword>
<keyword id="KW-0808">Transferase</keyword>
<organism>
    <name type="scientific">Protochlamydia amoebophila (strain UWE25)</name>
    <dbReference type="NCBI Taxonomy" id="264201"/>
    <lineage>
        <taxon>Bacteria</taxon>
        <taxon>Pseudomonadati</taxon>
        <taxon>Chlamydiota</taxon>
        <taxon>Chlamydiia</taxon>
        <taxon>Parachlamydiales</taxon>
        <taxon>Parachlamydiaceae</taxon>
        <taxon>Candidatus Protochlamydia</taxon>
    </lineage>
</organism>
<protein>
    <recommendedName>
        <fullName evidence="1">Ribosomal RNA large subunit methyltransferase H</fullName>
        <ecNumber evidence="1">2.1.1.177</ecNumber>
    </recommendedName>
    <alternativeName>
        <fullName evidence="1">23S rRNA (pseudouridine1915-N3)-methyltransferase</fullName>
    </alternativeName>
    <alternativeName>
        <fullName evidence="1">23S rRNA m3Psi1915 methyltransferase</fullName>
    </alternativeName>
    <alternativeName>
        <fullName evidence="1">rRNA (pseudouridine-N3-)-methyltransferase RlmH</fullName>
    </alternativeName>
</protein>
<comment type="function">
    <text evidence="1">Specifically methylates the pseudouridine at position 1915 (m3Psi1915) in 23S rRNA.</text>
</comment>
<comment type="catalytic activity">
    <reaction evidence="1">
        <text>pseudouridine(1915) in 23S rRNA + S-adenosyl-L-methionine = N(3)-methylpseudouridine(1915) in 23S rRNA + S-adenosyl-L-homocysteine + H(+)</text>
        <dbReference type="Rhea" id="RHEA:42752"/>
        <dbReference type="Rhea" id="RHEA-COMP:10221"/>
        <dbReference type="Rhea" id="RHEA-COMP:10222"/>
        <dbReference type="ChEBI" id="CHEBI:15378"/>
        <dbReference type="ChEBI" id="CHEBI:57856"/>
        <dbReference type="ChEBI" id="CHEBI:59789"/>
        <dbReference type="ChEBI" id="CHEBI:65314"/>
        <dbReference type="ChEBI" id="CHEBI:74486"/>
        <dbReference type="EC" id="2.1.1.177"/>
    </reaction>
</comment>
<comment type="subunit">
    <text evidence="1">Homodimer.</text>
</comment>
<comment type="subcellular location">
    <subcellularLocation>
        <location evidence="1">Cytoplasm</location>
    </subcellularLocation>
</comment>
<comment type="similarity">
    <text evidence="1">Belongs to the RNA methyltransferase RlmH family.</text>
</comment>
<evidence type="ECO:0000255" key="1">
    <source>
        <dbReference type="HAMAP-Rule" id="MF_00658"/>
    </source>
</evidence>
<feature type="chain" id="PRO_0000198154" description="Ribosomal RNA large subunit methyltransferase H">
    <location>
        <begin position="1"/>
        <end position="140"/>
    </location>
</feature>
<feature type="binding site" evidence="1">
    <location>
        <position position="58"/>
    </location>
    <ligand>
        <name>S-adenosyl-L-methionine</name>
        <dbReference type="ChEBI" id="CHEBI:59789"/>
    </ligand>
</feature>
<feature type="binding site" evidence="1">
    <location>
        <position position="90"/>
    </location>
    <ligand>
        <name>S-adenosyl-L-methionine</name>
        <dbReference type="ChEBI" id="CHEBI:59789"/>
    </ligand>
</feature>
<feature type="binding site" evidence="1">
    <location>
        <begin position="108"/>
        <end position="113"/>
    </location>
    <ligand>
        <name>S-adenosyl-L-methionine</name>
        <dbReference type="ChEBI" id="CHEBI:59789"/>
    </ligand>
</feature>
<proteinExistence type="inferred from homology"/>
<reference key="1">
    <citation type="journal article" date="2004" name="Science">
        <title>Illuminating the evolutionary history of chlamydiae.</title>
        <authorList>
            <person name="Horn M."/>
            <person name="Collingro A."/>
            <person name="Schmitz-Esser S."/>
            <person name="Beier C.L."/>
            <person name="Purkhold U."/>
            <person name="Fartmann B."/>
            <person name="Brandt P."/>
            <person name="Nyakatura G.J."/>
            <person name="Droege M."/>
            <person name="Frishman D."/>
            <person name="Rattei T."/>
            <person name="Mewes H.-W."/>
            <person name="Wagner M."/>
        </authorList>
    </citation>
    <scope>NUCLEOTIDE SEQUENCE [LARGE SCALE GENOMIC DNA]</scope>
    <source>
        <strain>UWE25</strain>
    </source>
</reference>
<dbReference type="EC" id="2.1.1.177" evidence="1"/>
<dbReference type="EMBL" id="BX908798">
    <property type="protein sequence ID" value="CAF24432.1"/>
    <property type="molecule type" value="Genomic_DNA"/>
</dbReference>
<dbReference type="RefSeq" id="WP_011176253.1">
    <property type="nucleotide sequence ID" value="NC_005861.2"/>
</dbReference>
<dbReference type="SMR" id="Q6MAG7"/>
<dbReference type="STRING" id="264201.pc1708"/>
<dbReference type="KEGG" id="pcu:PC_RS08180"/>
<dbReference type="eggNOG" id="COG1576">
    <property type="taxonomic scope" value="Bacteria"/>
</dbReference>
<dbReference type="HOGENOM" id="CLU_100552_1_0_0"/>
<dbReference type="OrthoDB" id="9806643at2"/>
<dbReference type="Proteomes" id="UP000000529">
    <property type="component" value="Chromosome"/>
</dbReference>
<dbReference type="GO" id="GO:0005737">
    <property type="term" value="C:cytoplasm"/>
    <property type="evidence" value="ECO:0007669"/>
    <property type="project" value="UniProtKB-SubCell"/>
</dbReference>
<dbReference type="GO" id="GO:0070038">
    <property type="term" value="F:rRNA (pseudouridine-N3-)-methyltransferase activity"/>
    <property type="evidence" value="ECO:0007669"/>
    <property type="project" value="UniProtKB-UniRule"/>
</dbReference>
<dbReference type="CDD" id="cd18081">
    <property type="entry name" value="RlmH-like"/>
    <property type="match status" value="1"/>
</dbReference>
<dbReference type="Gene3D" id="3.40.1280.10">
    <property type="match status" value="1"/>
</dbReference>
<dbReference type="HAMAP" id="MF_00658">
    <property type="entry name" value="23SrRNA_methyltr_H"/>
    <property type="match status" value="1"/>
</dbReference>
<dbReference type="InterPro" id="IPR029028">
    <property type="entry name" value="Alpha/beta_knot_MTases"/>
</dbReference>
<dbReference type="InterPro" id="IPR003742">
    <property type="entry name" value="RlmH-like"/>
</dbReference>
<dbReference type="InterPro" id="IPR029026">
    <property type="entry name" value="tRNA_m1G_MTases_N"/>
</dbReference>
<dbReference type="PANTHER" id="PTHR33603">
    <property type="entry name" value="METHYLTRANSFERASE"/>
    <property type="match status" value="1"/>
</dbReference>
<dbReference type="PANTHER" id="PTHR33603:SF1">
    <property type="entry name" value="RIBOSOMAL RNA LARGE SUBUNIT METHYLTRANSFERASE H"/>
    <property type="match status" value="1"/>
</dbReference>
<dbReference type="Pfam" id="PF02590">
    <property type="entry name" value="SPOUT_MTase"/>
    <property type="match status" value="1"/>
</dbReference>
<dbReference type="PIRSF" id="PIRSF004505">
    <property type="entry name" value="MT_bac"/>
    <property type="match status" value="1"/>
</dbReference>
<dbReference type="SUPFAM" id="SSF75217">
    <property type="entry name" value="alpha/beta knot"/>
    <property type="match status" value="1"/>
</dbReference>
<accession>Q6MAG7</accession>
<sequence length="140" mass="16227">MLKLRILSVGKTKEKWLEDAFNEYQKRLKANLQIECLWAKDSYQLLEWTQKESLIICLDPTGRLLTSEAFATFFSKCWEQGGSRLTIVIGGAEGLPLELKQHSILISLSLLTFTHQITRLILIEQIYRATEILKNSQYHK</sequence>